<reference key="1">
    <citation type="journal article" date="2006" name="BMC Evol. Biol.">
        <title>Complete plastid genome sequences of Drimys, Liriodendron, and Piper: implications for the phylogenetic relationships of magnoliids.</title>
        <authorList>
            <person name="Cai Z."/>
            <person name="Penaflor C."/>
            <person name="Kuehl J.V."/>
            <person name="Leebens-Mack J."/>
            <person name="Carlson J.E."/>
            <person name="dePamphilis C.W."/>
            <person name="Boore J.L."/>
            <person name="Jansen R.K."/>
        </authorList>
    </citation>
    <scope>NUCLEOTIDE SEQUENCE [LARGE SCALE GENOMIC DNA]</scope>
</reference>
<sequence>MTVPDIRKDFMIVNMGPHHPSMHGVLRLIVTLDGEDVIDCEPVLGYLHRGMEKIAENRTIIQYLPYVTRWDYLATMFTEAITVNAPEQLGNIQVPKRASYIRVIMLELSRIASHLLWLGPFMADIGAQTPFFYIFRERELLYDLFEAATGMRMMHNYFRIGGVAADLPHGWIDKCLDFCDYSLTGVVEYQKLITRNPIFLERVEGVGIIGGEEAINWGLSGPMLRASGIQWDLRKIDHYECYDEFDWEVQWQKEGDSLARYLVRISEMAESIKIIQQVLEGIPGGPYENLEVRRFDKARDSEWNDFEYRFISKKPSPTFELSKQELYVRVEAPKGELGIFLIGDNSVFPWRWKIRPPGFINLQILPQLVKRMKLADIMTILGSIDIIMGEVDR</sequence>
<name>NDHH_LIRTU</name>
<dbReference type="EC" id="7.1.1.-" evidence="1"/>
<dbReference type="EMBL" id="DQ899947">
    <property type="protein sequence ID" value="ABI32565.1"/>
    <property type="molecule type" value="Genomic_DNA"/>
</dbReference>
<dbReference type="RefSeq" id="YP_740258.1">
    <property type="nucleotide sequence ID" value="NC_008326.1"/>
</dbReference>
<dbReference type="SMR" id="Q0G9G3"/>
<dbReference type="GeneID" id="4266690"/>
<dbReference type="GO" id="GO:0009535">
    <property type="term" value="C:chloroplast thylakoid membrane"/>
    <property type="evidence" value="ECO:0007669"/>
    <property type="project" value="UniProtKB-SubCell"/>
</dbReference>
<dbReference type="GO" id="GO:0051287">
    <property type="term" value="F:NAD binding"/>
    <property type="evidence" value="ECO:0007669"/>
    <property type="project" value="InterPro"/>
</dbReference>
<dbReference type="GO" id="GO:0016655">
    <property type="term" value="F:oxidoreductase activity, acting on NAD(P)H, quinone or similar compound as acceptor"/>
    <property type="evidence" value="ECO:0007669"/>
    <property type="project" value="UniProtKB-UniRule"/>
</dbReference>
<dbReference type="GO" id="GO:0048038">
    <property type="term" value="F:quinone binding"/>
    <property type="evidence" value="ECO:0007669"/>
    <property type="project" value="UniProtKB-KW"/>
</dbReference>
<dbReference type="GO" id="GO:0019684">
    <property type="term" value="P:photosynthesis, light reaction"/>
    <property type="evidence" value="ECO:0007669"/>
    <property type="project" value="UniProtKB-UniRule"/>
</dbReference>
<dbReference type="FunFam" id="1.10.645.10:FF:000003">
    <property type="entry name" value="NAD(P)H-quinone oxidoreductase subunit H, chloroplastic"/>
    <property type="match status" value="1"/>
</dbReference>
<dbReference type="Gene3D" id="1.10.645.10">
    <property type="entry name" value="Cytochrome-c3 Hydrogenase, chain B"/>
    <property type="match status" value="1"/>
</dbReference>
<dbReference type="HAMAP" id="MF_01358">
    <property type="entry name" value="NDH1_NuoD"/>
    <property type="match status" value="1"/>
</dbReference>
<dbReference type="InterPro" id="IPR001135">
    <property type="entry name" value="NADH_Q_OxRdtase_suD"/>
</dbReference>
<dbReference type="InterPro" id="IPR014029">
    <property type="entry name" value="NADH_UbQ_OxRdtase_49kDa_CS"/>
</dbReference>
<dbReference type="InterPro" id="IPR022885">
    <property type="entry name" value="NDH1_su_D/H"/>
</dbReference>
<dbReference type="InterPro" id="IPR029014">
    <property type="entry name" value="NiFe-Hase_large"/>
</dbReference>
<dbReference type="NCBIfam" id="NF004739">
    <property type="entry name" value="PRK06075.1"/>
    <property type="match status" value="1"/>
</dbReference>
<dbReference type="NCBIfam" id="NF005649">
    <property type="entry name" value="PRK07415.1"/>
    <property type="match status" value="1"/>
</dbReference>
<dbReference type="PANTHER" id="PTHR11993:SF10">
    <property type="entry name" value="NADH DEHYDROGENASE [UBIQUINONE] IRON-SULFUR PROTEIN 2, MITOCHONDRIAL"/>
    <property type="match status" value="1"/>
</dbReference>
<dbReference type="PANTHER" id="PTHR11993">
    <property type="entry name" value="NADH-UBIQUINONE OXIDOREDUCTASE 49 KDA SUBUNIT"/>
    <property type="match status" value="1"/>
</dbReference>
<dbReference type="Pfam" id="PF00346">
    <property type="entry name" value="Complex1_49kDa"/>
    <property type="match status" value="1"/>
</dbReference>
<dbReference type="SUPFAM" id="SSF56762">
    <property type="entry name" value="HydB/Nqo4-like"/>
    <property type="match status" value="1"/>
</dbReference>
<dbReference type="PROSITE" id="PS00535">
    <property type="entry name" value="COMPLEX1_49K"/>
    <property type="match status" value="1"/>
</dbReference>
<accession>Q0G9G3</accession>
<feature type="chain" id="PRO_0000358001" description="NAD(P)H-quinone oxidoreductase subunit H, chloroplastic">
    <location>
        <begin position="1"/>
        <end position="393"/>
    </location>
</feature>
<protein>
    <recommendedName>
        <fullName evidence="1">NAD(P)H-quinone oxidoreductase subunit H, chloroplastic</fullName>
        <ecNumber evidence="1">7.1.1.-</ecNumber>
    </recommendedName>
    <alternativeName>
        <fullName>NAD(P)H dehydrogenase subunit H</fullName>
    </alternativeName>
    <alternativeName>
        <fullName evidence="1">NADH-plastoquinone oxidoreductase 49 kDa subunit</fullName>
    </alternativeName>
    <alternativeName>
        <fullName evidence="1">NADH-plastoquinone oxidoreductase subunit H</fullName>
    </alternativeName>
</protein>
<comment type="function">
    <text evidence="1">NDH shuttles electrons from NAD(P)H:plastoquinone, via FMN and iron-sulfur (Fe-S) centers, to quinones in the photosynthetic chain and possibly in a chloroplast respiratory chain. The immediate electron acceptor for the enzyme in this species is believed to be plastoquinone. Couples the redox reaction to proton translocation, and thus conserves the redox energy in a proton gradient.</text>
</comment>
<comment type="catalytic activity">
    <reaction evidence="1">
        <text>a plastoquinone + NADH + (n+1) H(+)(in) = a plastoquinol + NAD(+) + n H(+)(out)</text>
        <dbReference type="Rhea" id="RHEA:42608"/>
        <dbReference type="Rhea" id="RHEA-COMP:9561"/>
        <dbReference type="Rhea" id="RHEA-COMP:9562"/>
        <dbReference type="ChEBI" id="CHEBI:15378"/>
        <dbReference type="ChEBI" id="CHEBI:17757"/>
        <dbReference type="ChEBI" id="CHEBI:57540"/>
        <dbReference type="ChEBI" id="CHEBI:57945"/>
        <dbReference type="ChEBI" id="CHEBI:62192"/>
    </reaction>
</comment>
<comment type="catalytic activity">
    <reaction evidence="1">
        <text>a plastoquinone + NADPH + (n+1) H(+)(in) = a plastoquinol + NADP(+) + n H(+)(out)</text>
        <dbReference type="Rhea" id="RHEA:42612"/>
        <dbReference type="Rhea" id="RHEA-COMP:9561"/>
        <dbReference type="Rhea" id="RHEA-COMP:9562"/>
        <dbReference type="ChEBI" id="CHEBI:15378"/>
        <dbReference type="ChEBI" id="CHEBI:17757"/>
        <dbReference type="ChEBI" id="CHEBI:57783"/>
        <dbReference type="ChEBI" id="CHEBI:58349"/>
        <dbReference type="ChEBI" id="CHEBI:62192"/>
    </reaction>
</comment>
<comment type="subunit">
    <text evidence="1">NDH is composed of at least 16 different subunits, 5 of which are encoded in the nucleus.</text>
</comment>
<comment type="subcellular location">
    <subcellularLocation>
        <location evidence="1">Plastid</location>
        <location evidence="1">Chloroplast thylakoid membrane</location>
        <topology evidence="1">Peripheral membrane protein</topology>
        <orientation evidence="1">Stromal side</orientation>
    </subcellularLocation>
</comment>
<comment type="similarity">
    <text evidence="1">Belongs to the complex I 49 kDa subunit family.</text>
</comment>
<keyword id="KW-0150">Chloroplast</keyword>
<keyword id="KW-0472">Membrane</keyword>
<keyword id="KW-0520">NAD</keyword>
<keyword id="KW-0521">NADP</keyword>
<keyword id="KW-0934">Plastid</keyword>
<keyword id="KW-0618">Plastoquinone</keyword>
<keyword id="KW-0874">Quinone</keyword>
<keyword id="KW-0793">Thylakoid</keyword>
<keyword id="KW-1278">Translocase</keyword>
<keyword id="KW-0813">Transport</keyword>
<organism>
    <name type="scientific">Liriodendron tulipifera</name>
    <name type="common">Tuliptree</name>
    <name type="synonym">Tulip poplar</name>
    <dbReference type="NCBI Taxonomy" id="3415"/>
    <lineage>
        <taxon>Eukaryota</taxon>
        <taxon>Viridiplantae</taxon>
        <taxon>Streptophyta</taxon>
        <taxon>Embryophyta</taxon>
        <taxon>Tracheophyta</taxon>
        <taxon>Spermatophyta</taxon>
        <taxon>Magnoliopsida</taxon>
        <taxon>Magnoliidae</taxon>
        <taxon>Magnoliales</taxon>
        <taxon>Magnoliaceae</taxon>
        <taxon>Liriodendron</taxon>
    </lineage>
</organism>
<geneLocation type="chloroplast"/>
<evidence type="ECO:0000255" key="1">
    <source>
        <dbReference type="HAMAP-Rule" id="MF_01358"/>
    </source>
</evidence>
<proteinExistence type="inferred from homology"/>
<gene>
    <name evidence="1" type="primary">ndhH</name>
</gene>